<sequence length="138" mass="15775">MSLNRHMIREEAFQVLFALQSDSEADIQTVYEAIPHHDEKQIPPYLLTLVNGVREHQDQLDEQINDLLASGWTINRLAKPDLVILRLALFEIQYAENVPTVVAINEALELTKTFSSDKSRKFINGALGKFEKQVNENN</sequence>
<gene>
    <name evidence="1" type="primary">nusB</name>
    <name type="ordered locus">LAR_1117</name>
</gene>
<dbReference type="EMBL" id="AP007281">
    <property type="protein sequence ID" value="BAG25633.1"/>
    <property type="molecule type" value="Genomic_DNA"/>
</dbReference>
<dbReference type="RefSeq" id="WP_011953504.1">
    <property type="nucleotide sequence ID" value="NC_010609.1"/>
</dbReference>
<dbReference type="SMR" id="B2G851"/>
<dbReference type="KEGG" id="lrf:LAR_1117"/>
<dbReference type="HOGENOM" id="CLU_087843_3_2_9"/>
<dbReference type="GO" id="GO:0005829">
    <property type="term" value="C:cytosol"/>
    <property type="evidence" value="ECO:0007669"/>
    <property type="project" value="TreeGrafter"/>
</dbReference>
<dbReference type="GO" id="GO:0003723">
    <property type="term" value="F:RNA binding"/>
    <property type="evidence" value="ECO:0007669"/>
    <property type="project" value="UniProtKB-UniRule"/>
</dbReference>
<dbReference type="GO" id="GO:0006353">
    <property type="term" value="P:DNA-templated transcription termination"/>
    <property type="evidence" value="ECO:0007669"/>
    <property type="project" value="UniProtKB-UniRule"/>
</dbReference>
<dbReference type="GO" id="GO:0031564">
    <property type="term" value="P:transcription antitermination"/>
    <property type="evidence" value="ECO:0007669"/>
    <property type="project" value="UniProtKB-KW"/>
</dbReference>
<dbReference type="Gene3D" id="1.10.940.10">
    <property type="entry name" value="NusB-like"/>
    <property type="match status" value="1"/>
</dbReference>
<dbReference type="HAMAP" id="MF_00073">
    <property type="entry name" value="NusB"/>
    <property type="match status" value="1"/>
</dbReference>
<dbReference type="InterPro" id="IPR035926">
    <property type="entry name" value="NusB-like_sf"/>
</dbReference>
<dbReference type="InterPro" id="IPR011605">
    <property type="entry name" value="NusB_fam"/>
</dbReference>
<dbReference type="InterPro" id="IPR006027">
    <property type="entry name" value="NusB_RsmB_TIM44"/>
</dbReference>
<dbReference type="NCBIfam" id="TIGR01951">
    <property type="entry name" value="nusB"/>
    <property type="match status" value="1"/>
</dbReference>
<dbReference type="NCBIfam" id="NF001223">
    <property type="entry name" value="PRK00202.1-1"/>
    <property type="match status" value="1"/>
</dbReference>
<dbReference type="PANTHER" id="PTHR11078:SF3">
    <property type="entry name" value="ANTITERMINATION NUSB DOMAIN-CONTAINING PROTEIN"/>
    <property type="match status" value="1"/>
</dbReference>
<dbReference type="PANTHER" id="PTHR11078">
    <property type="entry name" value="N UTILIZATION SUBSTANCE PROTEIN B-RELATED"/>
    <property type="match status" value="1"/>
</dbReference>
<dbReference type="Pfam" id="PF01029">
    <property type="entry name" value="NusB"/>
    <property type="match status" value="1"/>
</dbReference>
<dbReference type="SUPFAM" id="SSF48013">
    <property type="entry name" value="NusB-like"/>
    <property type="match status" value="1"/>
</dbReference>
<proteinExistence type="inferred from homology"/>
<name>NUSB_LIMRJ</name>
<evidence type="ECO:0000255" key="1">
    <source>
        <dbReference type="HAMAP-Rule" id="MF_00073"/>
    </source>
</evidence>
<reference key="1">
    <citation type="journal article" date="2008" name="DNA Res.">
        <title>Comparative genome analysis of Lactobacillus reuteri and Lactobacillus fermentum reveal a genomic island for reuterin and cobalamin production.</title>
        <authorList>
            <person name="Morita H."/>
            <person name="Toh H."/>
            <person name="Fukuda S."/>
            <person name="Horikawa H."/>
            <person name="Oshima K."/>
            <person name="Suzuki T."/>
            <person name="Murakami M."/>
            <person name="Hisamatsu S."/>
            <person name="Kato Y."/>
            <person name="Takizawa T."/>
            <person name="Fukuoka H."/>
            <person name="Yoshimura T."/>
            <person name="Itoh K."/>
            <person name="O'Sullivan D.J."/>
            <person name="McKay L.L."/>
            <person name="Ohno H."/>
            <person name="Kikuchi J."/>
            <person name="Masaoka T."/>
            <person name="Hattori M."/>
        </authorList>
    </citation>
    <scope>NUCLEOTIDE SEQUENCE [LARGE SCALE GENOMIC DNA]</scope>
    <source>
        <strain>JCM 1112</strain>
    </source>
</reference>
<keyword id="KW-0694">RNA-binding</keyword>
<keyword id="KW-0804">Transcription</keyword>
<keyword id="KW-0889">Transcription antitermination</keyword>
<keyword id="KW-0805">Transcription regulation</keyword>
<organism>
    <name type="scientific">Limosilactobacillus reuteri subsp. reuteri (strain JCM 1112)</name>
    <name type="common">Lactobacillus reuteri</name>
    <dbReference type="NCBI Taxonomy" id="557433"/>
    <lineage>
        <taxon>Bacteria</taxon>
        <taxon>Bacillati</taxon>
        <taxon>Bacillota</taxon>
        <taxon>Bacilli</taxon>
        <taxon>Lactobacillales</taxon>
        <taxon>Lactobacillaceae</taxon>
        <taxon>Limosilactobacillus</taxon>
    </lineage>
</organism>
<feature type="chain" id="PRO_1000092563" description="Transcription antitermination protein NusB">
    <location>
        <begin position="1"/>
        <end position="138"/>
    </location>
</feature>
<protein>
    <recommendedName>
        <fullName evidence="1">Transcription antitermination protein NusB</fullName>
    </recommendedName>
    <alternativeName>
        <fullName evidence="1">Antitermination factor NusB</fullName>
    </alternativeName>
</protein>
<comment type="function">
    <text evidence="1">Involved in transcription antitermination. Required for transcription of ribosomal RNA (rRNA) genes. Binds specifically to the boxA antiterminator sequence of the ribosomal RNA (rrn) operons.</text>
</comment>
<comment type="similarity">
    <text evidence="1">Belongs to the NusB family.</text>
</comment>
<accession>B2G851</accession>